<evidence type="ECO:0000255" key="1">
    <source>
        <dbReference type="HAMAP-Rule" id="MF_01092"/>
    </source>
</evidence>
<proteinExistence type="inferred from homology"/>
<reference key="1">
    <citation type="submission" date="2006-08" db="EMBL/GenBank/DDBJ databases">
        <title>Complete sequence of chromosome 1 of Burkholderia cenocepacia HI2424.</title>
        <authorList>
            <person name="Copeland A."/>
            <person name="Lucas S."/>
            <person name="Lapidus A."/>
            <person name="Barry K."/>
            <person name="Detter J.C."/>
            <person name="Glavina del Rio T."/>
            <person name="Hammon N."/>
            <person name="Israni S."/>
            <person name="Pitluck S."/>
            <person name="Chain P."/>
            <person name="Malfatti S."/>
            <person name="Shin M."/>
            <person name="Vergez L."/>
            <person name="Schmutz J."/>
            <person name="Larimer F."/>
            <person name="Land M."/>
            <person name="Hauser L."/>
            <person name="Kyrpides N."/>
            <person name="Kim E."/>
            <person name="LiPuma J.J."/>
            <person name="Gonzalez C.F."/>
            <person name="Konstantinidis K."/>
            <person name="Tiedje J.M."/>
            <person name="Richardson P."/>
        </authorList>
    </citation>
    <scope>NUCLEOTIDE SEQUENCE [LARGE SCALE GENOMIC DNA]</scope>
    <source>
        <strain>HI2424</strain>
    </source>
</reference>
<keyword id="KW-0131">Cell cycle</keyword>
<keyword id="KW-0132">Cell division</keyword>
<keyword id="KW-0963">Cytoplasm</keyword>
<keyword id="KW-0717">Septation</keyword>
<name>ZAPD_BURCH</name>
<sequence>MILYEYPFNERIRTLLRLEDLFERFAFFLAQEDPREHHVALTTLFEIAEVTGRADLKSDLMKELERQRQTLAPFRGNPGIEQNALEAVLGEIEQTLANLAQMQGKTGQHLVDNEWLASIRSRAVIPGGTCKFDLPSYYAWQQWPAEQRRQDIAKWMLPMLPLRDAAAIVLRLARESGQASKVMAMQGSYQQMLSGRSYQLMQVRVPPELRVIPEASANKYMLWVRFTMQDGDVRPRAVDIDVPFHLTLCNL</sequence>
<feature type="chain" id="PRO_1000064892" description="Cell division protein ZapD">
    <location>
        <begin position="1"/>
        <end position="251"/>
    </location>
</feature>
<accession>A0K4A1</accession>
<comment type="function">
    <text evidence="1">Cell division factor that enhances FtsZ-ring assembly. Directly interacts with FtsZ and promotes bundling of FtsZ protofilaments, with a reduction in FtsZ GTPase activity.</text>
</comment>
<comment type="subunit">
    <text evidence="1">Interacts with FtsZ.</text>
</comment>
<comment type="subcellular location">
    <subcellularLocation>
        <location evidence="1">Cytoplasm</location>
    </subcellularLocation>
    <text evidence="1">Localizes to mid-cell in an FtsZ-dependent manner.</text>
</comment>
<comment type="similarity">
    <text evidence="1">Belongs to the ZapD family.</text>
</comment>
<dbReference type="EMBL" id="CP000458">
    <property type="protein sequence ID" value="ABK07328.1"/>
    <property type="molecule type" value="Genomic_DNA"/>
</dbReference>
<dbReference type="RefSeq" id="WP_011544510.1">
    <property type="nucleotide sequence ID" value="NC_008542.1"/>
</dbReference>
<dbReference type="SMR" id="A0K4A1"/>
<dbReference type="KEGG" id="bch:Bcen2424_0574"/>
<dbReference type="HOGENOM" id="CLU_076303_0_1_4"/>
<dbReference type="GO" id="GO:0032153">
    <property type="term" value="C:cell division site"/>
    <property type="evidence" value="ECO:0007669"/>
    <property type="project" value="TreeGrafter"/>
</dbReference>
<dbReference type="GO" id="GO:0005737">
    <property type="term" value="C:cytoplasm"/>
    <property type="evidence" value="ECO:0007669"/>
    <property type="project" value="UniProtKB-SubCell"/>
</dbReference>
<dbReference type="GO" id="GO:0000917">
    <property type="term" value="P:division septum assembly"/>
    <property type="evidence" value="ECO:0007669"/>
    <property type="project" value="UniProtKB-KW"/>
</dbReference>
<dbReference type="GO" id="GO:0043093">
    <property type="term" value="P:FtsZ-dependent cytokinesis"/>
    <property type="evidence" value="ECO:0007669"/>
    <property type="project" value="UniProtKB-UniRule"/>
</dbReference>
<dbReference type="Gene3D" id="1.10.3900.10">
    <property type="entry name" value="YacF-like"/>
    <property type="match status" value="1"/>
</dbReference>
<dbReference type="Gene3D" id="2.60.440.10">
    <property type="entry name" value="YacF-like domains"/>
    <property type="match status" value="1"/>
</dbReference>
<dbReference type="HAMAP" id="MF_01092">
    <property type="entry name" value="ZapD"/>
    <property type="match status" value="1"/>
</dbReference>
<dbReference type="InterPro" id="IPR009777">
    <property type="entry name" value="ZapD"/>
</dbReference>
<dbReference type="InterPro" id="IPR027462">
    <property type="entry name" value="ZapD_C"/>
</dbReference>
<dbReference type="InterPro" id="IPR036268">
    <property type="entry name" value="ZapD_sf"/>
</dbReference>
<dbReference type="NCBIfam" id="NF003656">
    <property type="entry name" value="PRK05287.1-4"/>
    <property type="match status" value="1"/>
</dbReference>
<dbReference type="PANTHER" id="PTHR39455">
    <property type="entry name" value="CELL DIVISION PROTEIN ZAPD"/>
    <property type="match status" value="1"/>
</dbReference>
<dbReference type="PANTHER" id="PTHR39455:SF1">
    <property type="entry name" value="CELL DIVISION PROTEIN ZAPD"/>
    <property type="match status" value="1"/>
</dbReference>
<dbReference type="Pfam" id="PF07072">
    <property type="entry name" value="ZapD"/>
    <property type="match status" value="1"/>
</dbReference>
<dbReference type="SUPFAM" id="SSF160950">
    <property type="entry name" value="YacF-like"/>
    <property type="match status" value="1"/>
</dbReference>
<gene>
    <name evidence="1" type="primary">zapD</name>
    <name type="ordered locus">Bcen2424_0574</name>
</gene>
<protein>
    <recommendedName>
        <fullName evidence="1">Cell division protein ZapD</fullName>
    </recommendedName>
    <alternativeName>
        <fullName evidence="1">Z ring-associated protein D</fullName>
    </alternativeName>
</protein>
<organism>
    <name type="scientific">Burkholderia cenocepacia (strain HI2424)</name>
    <dbReference type="NCBI Taxonomy" id="331272"/>
    <lineage>
        <taxon>Bacteria</taxon>
        <taxon>Pseudomonadati</taxon>
        <taxon>Pseudomonadota</taxon>
        <taxon>Betaproteobacteria</taxon>
        <taxon>Burkholderiales</taxon>
        <taxon>Burkholderiaceae</taxon>
        <taxon>Burkholderia</taxon>
        <taxon>Burkholderia cepacia complex</taxon>
    </lineage>
</organism>